<proteinExistence type="inferred from homology"/>
<comment type="function">
    <text evidence="1">Specifically methylates the guanine in position 1207 of 16S rRNA in the 30S particle.</text>
</comment>
<comment type="catalytic activity">
    <reaction evidence="1">
        <text>guanosine(1207) in 16S rRNA + S-adenosyl-L-methionine = N(2)-methylguanosine(1207) in 16S rRNA + S-adenosyl-L-homocysteine + H(+)</text>
        <dbReference type="Rhea" id="RHEA:42736"/>
        <dbReference type="Rhea" id="RHEA-COMP:10213"/>
        <dbReference type="Rhea" id="RHEA-COMP:10214"/>
        <dbReference type="ChEBI" id="CHEBI:15378"/>
        <dbReference type="ChEBI" id="CHEBI:57856"/>
        <dbReference type="ChEBI" id="CHEBI:59789"/>
        <dbReference type="ChEBI" id="CHEBI:74269"/>
        <dbReference type="ChEBI" id="CHEBI:74481"/>
        <dbReference type="EC" id="2.1.1.172"/>
    </reaction>
</comment>
<comment type="subunit">
    <text evidence="1">Monomer.</text>
</comment>
<comment type="subcellular location">
    <subcellularLocation>
        <location evidence="1">Cytoplasm</location>
    </subcellularLocation>
</comment>
<comment type="similarity">
    <text evidence="1">Belongs to the methyltransferase superfamily. RsmC family.</text>
</comment>
<accession>Q87LY1</accession>
<reference key="1">
    <citation type="journal article" date="2003" name="Lancet">
        <title>Genome sequence of Vibrio parahaemolyticus: a pathogenic mechanism distinct from that of V. cholerae.</title>
        <authorList>
            <person name="Makino K."/>
            <person name="Oshima K."/>
            <person name="Kurokawa K."/>
            <person name="Yokoyama K."/>
            <person name="Uda T."/>
            <person name="Tagomori K."/>
            <person name="Iijima Y."/>
            <person name="Najima M."/>
            <person name="Nakano M."/>
            <person name="Yamashita A."/>
            <person name="Kubota Y."/>
            <person name="Kimura S."/>
            <person name="Yasunaga T."/>
            <person name="Honda T."/>
            <person name="Shinagawa H."/>
            <person name="Hattori M."/>
            <person name="Iida T."/>
        </authorList>
    </citation>
    <scope>NUCLEOTIDE SEQUENCE [LARGE SCALE GENOMIC DNA]</scope>
    <source>
        <strain>RIMD 2210633</strain>
    </source>
</reference>
<protein>
    <recommendedName>
        <fullName evidence="1">Ribosomal RNA small subunit methyltransferase C</fullName>
        <ecNumber evidence="1">2.1.1.172</ecNumber>
    </recommendedName>
    <alternativeName>
        <fullName evidence="1">16S rRNA m2G1207 methyltransferase</fullName>
    </alternativeName>
    <alternativeName>
        <fullName evidence="1">rRNA (guanine-N(2)-)-methyltransferase RsmC</fullName>
    </alternativeName>
</protein>
<feature type="chain" id="PRO_0000369796" description="Ribosomal RNA small subunit methyltransferase C">
    <location>
        <begin position="1"/>
        <end position="341"/>
    </location>
</feature>
<gene>
    <name evidence="1" type="primary">rsmC</name>
    <name type="ordered locus">VP2477</name>
</gene>
<organism>
    <name type="scientific">Vibrio parahaemolyticus serotype O3:K6 (strain RIMD 2210633)</name>
    <dbReference type="NCBI Taxonomy" id="223926"/>
    <lineage>
        <taxon>Bacteria</taxon>
        <taxon>Pseudomonadati</taxon>
        <taxon>Pseudomonadota</taxon>
        <taxon>Gammaproteobacteria</taxon>
        <taxon>Vibrionales</taxon>
        <taxon>Vibrionaceae</taxon>
        <taxon>Vibrio</taxon>
    </lineage>
</organism>
<evidence type="ECO:0000255" key="1">
    <source>
        <dbReference type="HAMAP-Rule" id="MF_01862"/>
    </source>
</evidence>
<name>RSMC_VIBPA</name>
<keyword id="KW-0963">Cytoplasm</keyword>
<keyword id="KW-0489">Methyltransferase</keyword>
<keyword id="KW-0698">rRNA processing</keyword>
<keyword id="KW-0949">S-adenosyl-L-methionine</keyword>
<keyword id="KW-0808">Transferase</keyword>
<dbReference type="EC" id="2.1.1.172" evidence="1"/>
<dbReference type="EMBL" id="BA000031">
    <property type="protein sequence ID" value="BAC60740.1"/>
    <property type="molecule type" value="Genomic_DNA"/>
</dbReference>
<dbReference type="RefSeq" id="NP_798856.1">
    <property type="nucleotide sequence ID" value="NC_004603.1"/>
</dbReference>
<dbReference type="RefSeq" id="WP_005479074.1">
    <property type="nucleotide sequence ID" value="NC_004603.1"/>
</dbReference>
<dbReference type="SMR" id="Q87LY1"/>
<dbReference type="GeneID" id="1189992"/>
<dbReference type="KEGG" id="vpa:VP2477"/>
<dbReference type="PATRIC" id="fig|223926.6.peg.2378"/>
<dbReference type="eggNOG" id="COG2813">
    <property type="taxonomic scope" value="Bacteria"/>
</dbReference>
<dbReference type="HOGENOM" id="CLU_049581_0_1_6"/>
<dbReference type="Proteomes" id="UP000002493">
    <property type="component" value="Chromosome 1"/>
</dbReference>
<dbReference type="GO" id="GO:0005737">
    <property type="term" value="C:cytoplasm"/>
    <property type="evidence" value="ECO:0007669"/>
    <property type="project" value="UniProtKB-SubCell"/>
</dbReference>
<dbReference type="GO" id="GO:0052914">
    <property type="term" value="F:16S rRNA (guanine(1207)-N(2))-methyltransferase activity"/>
    <property type="evidence" value="ECO:0007669"/>
    <property type="project" value="UniProtKB-EC"/>
</dbReference>
<dbReference type="GO" id="GO:0003676">
    <property type="term" value="F:nucleic acid binding"/>
    <property type="evidence" value="ECO:0007669"/>
    <property type="project" value="InterPro"/>
</dbReference>
<dbReference type="CDD" id="cd02440">
    <property type="entry name" value="AdoMet_MTases"/>
    <property type="match status" value="1"/>
</dbReference>
<dbReference type="Gene3D" id="3.40.50.150">
    <property type="entry name" value="Vaccinia Virus protein VP39"/>
    <property type="match status" value="2"/>
</dbReference>
<dbReference type="HAMAP" id="MF_01862">
    <property type="entry name" value="16SrRNA_methyltr_C"/>
    <property type="match status" value="1"/>
</dbReference>
<dbReference type="InterPro" id="IPR002052">
    <property type="entry name" value="DNA_methylase_N6_adenine_CS"/>
</dbReference>
<dbReference type="InterPro" id="IPR013675">
    <property type="entry name" value="Mtase_sm_N"/>
</dbReference>
<dbReference type="InterPro" id="IPR023543">
    <property type="entry name" value="rRNA_ssu_MeTfrase_C"/>
</dbReference>
<dbReference type="InterPro" id="IPR046977">
    <property type="entry name" value="RsmC/RlmG"/>
</dbReference>
<dbReference type="InterPro" id="IPR029063">
    <property type="entry name" value="SAM-dependent_MTases_sf"/>
</dbReference>
<dbReference type="InterPro" id="IPR007848">
    <property type="entry name" value="Small_mtfrase_dom"/>
</dbReference>
<dbReference type="NCBIfam" id="NF007023">
    <property type="entry name" value="PRK09489.1"/>
    <property type="match status" value="1"/>
</dbReference>
<dbReference type="PANTHER" id="PTHR47816">
    <property type="entry name" value="RIBOSOMAL RNA SMALL SUBUNIT METHYLTRANSFERASE C"/>
    <property type="match status" value="1"/>
</dbReference>
<dbReference type="PANTHER" id="PTHR47816:SF4">
    <property type="entry name" value="RIBOSOMAL RNA SMALL SUBUNIT METHYLTRANSFERASE C"/>
    <property type="match status" value="1"/>
</dbReference>
<dbReference type="Pfam" id="PF05175">
    <property type="entry name" value="MTS"/>
    <property type="match status" value="1"/>
</dbReference>
<dbReference type="Pfam" id="PF08468">
    <property type="entry name" value="MTS_N"/>
    <property type="match status" value="1"/>
</dbReference>
<dbReference type="SUPFAM" id="SSF53335">
    <property type="entry name" value="S-adenosyl-L-methionine-dependent methyltransferases"/>
    <property type="match status" value="1"/>
</dbReference>
<sequence>MSAYIAPSQIAQRQLEYFNGKHVLVAGEVEDMFPLELTAHCESVEVFTSNYSYFRQIRHSDKIKSHFGSEFDVETQADMLLLYWPKAKAEAEYLLAMLMAKLGVNTEIVVVGENRSGVKSIEKMFKEYGPVNKYDSARRCSFYWGNCLNEPKPFNQEEWFKSYTVTLGEQSLTVKSLPGVFSHGEFDLGSRLLLETLPNLSGKVLDFGCGAGVLGAFMAKANPEIAIEMCDINAYAITSSQATLEANGLSGRVFASDIYSDTANDYRFIISNPPFHSGLDTNYNAAETLLGHAPQHLSNHGEMIIVANSFLKYPPIIENAFNNCETLNKTNKFSIYYAKKS</sequence>